<evidence type="ECO:0000250" key="1"/>
<evidence type="ECO:0000255" key="2"/>
<evidence type="ECO:0000256" key="3">
    <source>
        <dbReference type="SAM" id="MobiDB-lite"/>
    </source>
</evidence>
<evidence type="ECO:0000305" key="4"/>
<feature type="chain" id="PRO_0000286015" description="Aquaporin PIP1-3/PIP1-4">
    <location>
        <begin position="1"/>
        <end position="292"/>
    </location>
</feature>
<feature type="transmembrane region" description="Helical; Name=1" evidence="2">
    <location>
        <begin position="61"/>
        <end position="81"/>
    </location>
</feature>
<feature type="transmembrane region" description="Helical; Name=2" evidence="2">
    <location>
        <begin position="96"/>
        <end position="118"/>
    </location>
</feature>
<feature type="transmembrane region" description="Helical; Name=3" evidence="2">
    <location>
        <begin position="139"/>
        <end position="159"/>
    </location>
</feature>
<feature type="transmembrane region" description="Helical; Name=4" evidence="2">
    <location>
        <begin position="181"/>
        <end position="201"/>
    </location>
</feature>
<feature type="transmembrane region" description="Helical; Name=5" evidence="2">
    <location>
        <begin position="215"/>
        <end position="235"/>
    </location>
</feature>
<feature type="transmembrane region" description="Helical; Name=6" evidence="2">
    <location>
        <begin position="263"/>
        <end position="283"/>
    </location>
</feature>
<feature type="region of interest" description="Disordered" evidence="3">
    <location>
        <begin position="1"/>
        <end position="42"/>
    </location>
</feature>
<feature type="short sequence motif" description="NPA 1" evidence="1">
    <location>
        <begin position="120"/>
        <end position="122"/>
    </location>
</feature>
<feature type="short sequence motif" description="NPA 2" evidence="1">
    <location>
        <begin position="241"/>
        <end position="243"/>
    </location>
</feature>
<reference key="1">
    <citation type="journal article" date="2001" name="Plant Physiol.">
        <title>Aquaporins constitute a large and highly divergent protein family in maize.</title>
        <authorList>
            <person name="Chaumont F."/>
            <person name="Barrieu F."/>
            <person name="Wojcik E."/>
            <person name="Chrispeels M.J."/>
            <person name="Jung R."/>
        </authorList>
    </citation>
    <scope>NUCLEOTIDE SEQUENCE [MRNA]</scope>
    <scope>GENE FAMILY</scope>
    <scope>NOMENCLATURE</scope>
    <source>
        <strain>cv. B73</strain>
    </source>
</reference>
<sequence length="292" mass="30998">MEGKEEDVRLGANKFSERQPIGTAAQGAGAGDDDKDYKEPPPAPLFEPGELKSWSFYRAGIAEFVATFLFLYITVLTVMGVSKSTSKCATVGIQGIAWSFGGMIFALVYCTAGISGGHINPAVTFGLFLARKLSLTRAIFYIIMQCLGAICGAGVVKGFQQGLYMGNGGGANVVAPGYTKGDGLGAEIVGTFILVYTVFSATDAKRNARDSHVPILAPLPIGFAVFLVHLATIPITGTGINPARSLGAAIIYNRDHAWSDHWIFWVGPFIGAALAAIYHQVIIRAIPFKSRS</sequence>
<name>PIP13_MAIZE</name>
<dbReference type="EMBL" id="AF326487">
    <property type="protein sequence ID" value="AAK26754.1"/>
    <property type="molecule type" value="mRNA"/>
</dbReference>
<dbReference type="EMBL" id="AF326488">
    <property type="protein sequence ID" value="AAK26755.1"/>
    <property type="molecule type" value="mRNA"/>
</dbReference>
<dbReference type="RefSeq" id="NP_001105022.1">
    <property type="nucleotide sequence ID" value="NM_001111552.1"/>
</dbReference>
<dbReference type="SMR" id="Q9AQU5"/>
<dbReference type="FunCoup" id="Q9AQU5">
    <property type="interactions" value="436"/>
</dbReference>
<dbReference type="STRING" id="4577.Q9AQU5"/>
<dbReference type="PaxDb" id="4577-GRMZM2G392975_P01"/>
<dbReference type="ProMEX" id="Q9AQU5"/>
<dbReference type="EnsemblPlants" id="Zm00001eb186900_T001">
    <property type="protein sequence ID" value="Zm00001eb186900_P001"/>
    <property type="gene ID" value="Zm00001eb186900"/>
</dbReference>
<dbReference type="Gramene" id="Zm00001eb186900_T001">
    <property type="protein sequence ID" value="Zm00001eb186900_P001"/>
    <property type="gene ID" value="Zm00001eb186900"/>
</dbReference>
<dbReference type="eggNOG" id="KOG0223">
    <property type="taxonomic scope" value="Eukaryota"/>
</dbReference>
<dbReference type="HOGENOM" id="CLU_020019_3_0_1"/>
<dbReference type="InParanoid" id="Q9AQU5"/>
<dbReference type="OMA" id="IFNNDHA"/>
<dbReference type="OrthoDB" id="3222at2759"/>
<dbReference type="Proteomes" id="UP000007305">
    <property type="component" value="Chromosome 4"/>
</dbReference>
<dbReference type="ExpressionAtlas" id="Q9AQU5">
    <property type="expression patterns" value="baseline and differential"/>
</dbReference>
<dbReference type="GO" id="GO:0005829">
    <property type="term" value="C:cytosol"/>
    <property type="evidence" value="ECO:0000314"/>
    <property type="project" value="AgBase"/>
</dbReference>
<dbReference type="GO" id="GO:0016020">
    <property type="term" value="C:membrane"/>
    <property type="evidence" value="ECO:0000304"/>
    <property type="project" value="AgBase"/>
</dbReference>
<dbReference type="GO" id="GO:0005886">
    <property type="term" value="C:plasma membrane"/>
    <property type="evidence" value="ECO:0000314"/>
    <property type="project" value="AgBase"/>
</dbReference>
<dbReference type="GO" id="GO:0015250">
    <property type="term" value="F:water channel activity"/>
    <property type="evidence" value="ECO:0000318"/>
    <property type="project" value="GO_Central"/>
</dbReference>
<dbReference type="GO" id="GO:0009414">
    <property type="term" value="P:response to water deprivation"/>
    <property type="evidence" value="ECO:0000318"/>
    <property type="project" value="GO_Central"/>
</dbReference>
<dbReference type="CDD" id="cd00333">
    <property type="entry name" value="MIP"/>
    <property type="match status" value="1"/>
</dbReference>
<dbReference type="FunFam" id="1.20.1080.10:FF:000001">
    <property type="entry name" value="Probable aquaporin PIP1-2"/>
    <property type="match status" value="1"/>
</dbReference>
<dbReference type="Gene3D" id="1.20.1080.10">
    <property type="entry name" value="Glycerol uptake facilitator protein"/>
    <property type="match status" value="1"/>
</dbReference>
<dbReference type="InterPro" id="IPR023271">
    <property type="entry name" value="Aquaporin-like"/>
</dbReference>
<dbReference type="InterPro" id="IPR034294">
    <property type="entry name" value="Aquaporin_transptr"/>
</dbReference>
<dbReference type="InterPro" id="IPR000425">
    <property type="entry name" value="MIP"/>
</dbReference>
<dbReference type="InterPro" id="IPR022357">
    <property type="entry name" value="MIP_CS"/>
</dbReference>
<dbReference type="NCBIfam" id="TIGR00861">
    <property type="entry name" value="MIP"/>
    <property type="match status" value="1"/>
</dbReference>
<dbReference type="PANTHER" id="PTHR45687">
    <property type="entry name" value="AQUAPORIN OR AQUAGLYCEROPORIN RELATED"/>
    <property type="match status" value="1"/>
</dbReference>
<dbReference type="Pfam" id="PF00230">
    <property type="entry name" value="MIP"/>
    <property type="match status" value="1"/>
</dbReference>
<dbReference type="PRINTS" id="PR00783">
    <property type="entry name" value="MINTRINSICP"/>
</dbReference>
<dbReference type="SUPFAM" id="SSF81338">
    <property type="entry name" value="Aquaporin-like"/>
    <property type="match status" value="1"/>
</dbReference>
<dbReference type="PROSITE" id="PS00221">
    <property type="entry name" value="MIP"/>
    <property type="match status" value="1"/>
</dbReference>
<comment type="function">
    <text evidence="1">Aquaporins facilitate the transport of water and small neutral solutes across cell membranes.</text>
</comment>
<comment type="subcellular location">
    <subcellularLocation>
        <location evidence="1">Cell membrane</location>
        <topology evidence="1">Multi-pass membrane protein</topology>
    </subcellularLocation>
</comment>
<comment type="domain">
    <text>Aquaporins contain two tandem repeats each containing three membrane-spanning domains and a pore-forming loop with the signature motif Asn-Pro-Ala (NPA).</text>
</comment>
<comment type="similarity">
    <text evidence="4">Belongs to the MIP/aquaporin (TC 1.A.8) family. PIP (TC 1.A.8.11) subfamily.</text>
</comment>
<accession>Q9AQU5</accession>
<gene>
    <name type="primary">PIP1-3</name>
</gene>
<gene>
    <name type="primary">PIP1-4</name>
</gene>
<protein>
    <recommendedName>
        <fullName>Aquaporin PIP1-3/PIP1-4</fullName>
    </recommendedName>
    <alternativeName>
        <fullName>Plasma membrane intrinsic protein 1-3</fullName>
    </alternativeName>
    <alternativeName>
        <fullName>Plasma membrane intrinsic protein 1-4</fullName>
    </alternativeName>
    <alternativeName>
        <fullName>ZmPIP1-3</fullName>
    </alternativeName>
    <alternativeName>
        <fullName>ZmPIP1-4</fullName>
    </alternativeName>
    <alternativeName>
        <fullName>ZmPIP1;3</fullName>
    </alternativeName>
    <alternativeName>
        <fullName>ZmPIP1;4</fullName>
    </alternativeName>
</protein>
<proteinExistence type="evidence at transcript level"/>
<keyword id="KW-1003">Cell membrane</keyword>
<keyword id="KW-0472">Membrane</keyword>
<keyword id="KW-1185">Reference proteome</keyword>
<keyword id="KW-0677">Repeat</keyword>
<keyword id="KW-0812">Transmembrane</keyword>
<keyword id="KW-1133">Transmembrane helix</keyword>
<keyword id="KW-0813">Transport</keyword>
<organism>
    <name type="scientific">Zea mays</name>
    <name type="common">Maize</name>
    <dbReference type="NCBI Taxonomy" id="4577"/>
    <lineage>
        <taxon>Eukaryota</taxon>
        <taxon>Viridiplantae</taxon>
        <taxon>Streptophyta</taxon>
        <taxon>Embryophyta</taxon>
        <taxon>Tracheophyta</taxon>
        <taxon>Spermatophyta</taxon>
        <taxon>Magnoliopsida</taxon>
        <taxon>Liliopsida</taxon>
        <taxon>Poales</taxon>
        <taxon>Poaceae</taxon>
        <taxon>PACMAD clade</taxon>
        <taxon>Panicoideae</taxon>
        <taxon>Andropogonodae</taxon>
        <taxon>Andropogoneae</taxon>
        <taxon>Tripsacinae</taxon>
        <taxon>Zea</taxon>
    </lineage>
</organism>